<keyword id="KW-0030">Aminoacyl-tRNA synthetase</keyword>
<keyword id="KW-0067">ATP-binding</keyword>
<keyword id="KW-0963">Cytoplasm</keyword>
<keyword id="KW-0436">Ligase</keyword>
<keyword id="KW-0547">Nucleotide-binding</keyword>
<keyword id="KW-0648">Protein biosynthesis</keyword>
<keyword id="KW-1185">Reference proteome</keyword>
<accession>P47508</accession>
<accession>Q49228</accession>
<accession>Q49290</accession>
<dbReference type="EC" id="6.1.1.4" evidence="1"/>
<dbReference type="EMBL" id="L43967">
    <property type="protein sequence ID" value="AAC71488.1"/>
    <property type="molecule type" value="Genomic_DNA"/>
</dbReference>
<dbReference type="EMBL" id="U01780">
    <property type="protein sequence ID" value="AAD10600.1"/>
    <property type="molecule type" value="Genomic_DNA"/>
</dbReference>
<dbReference type="EMBL" id="U02167">
    <property type="protein sequence ID" value="AAD12449.1"/>
    <property type="molecule type" value="Genomic_DNA"/>
</dbReference>
<dbReference type="PIR" id="D64229">
    <property type="entry name" value="D64229"/>
</dbReference>
<dbReference type="RefSeq" id="WP_010869401.1">
    <property type="nucleotide sequence ID" value="NC_000908.2"/>
</dbReference>
<dbReference type="SMR" id="P47508"/>
<dbReference type="FunCoup" id="P47508">
    <property type="interactions" value="222"/>
</dbReference>
<dbReference type="STRING" id="243273.MG_266"/>
<dbReference type="GeneID" id="88282421"/>
<dbReference type="KEGG" id="mge:MG_266"/>
<dbReference type="eggNOG" id="COG0495">
    <property type="taxonomic scope" value="Bacteria"/>
</dbReference>
<dbReference type="HOGENOM" id="CLU_004427_0_0_14"/>
<dbReference type="InParanoid" id="P47508"/>
<dbReference type="OrthoDB" id="9810365at2"/>
<dbReference type="BioCyc" id="MGEN243273:G1GJ2-322-MONOMER"/>
<dbReference type="Proteomes" id="UP000000807">
    <property type="component" value="Chromosome"/>
</dbReference>
<dbReference type="GO" id="GO:0005829">
    <property type="term" value="C:cytosol"/>
    <property type="evidence" value="ECO:0000318"/>
    <property type="project" value="GO_Central"/>
</dbReference>
<dbReference type="GO" id="GO:0002161">
    <property type="term" value="F:aminoacyl-tRNA deacylase activity"/>
    <property type="evidence" value="ECO:0007669"/>
    <property type="project" value="InterPro"/>
</dbReference>
<dbReference type="GO" id="GO:0005524">
    <property type="term" value="F:ATP binding"/>
    <property type="evidence" value="ECO:0007669"/>
    <property type="project" value="UniProtKB-UniRule"/>
</dbReference>
<dbReference type="GO" id="GO:0004823">
    <property type="term" value="F:leucine-tRNA ligase activity"/>
    <property type="evidence" value="ECO:0000318"/>
    <property type="project" value="GO_Central"/>
</dbReference>
<dbReference type="GO" id="GO:0006429">
    <property type="term" value="P:leucyl-tRNA aminoacylation"/>
    <property type="evidence" value="ECO:0000318"/>
    <property type="project" value="GO_Central"/>
</dbReference>
<dbReference type="CDD" id="cd00812">
    <property type="entry name" value="LeuRS_core"/>
    <property type="match status" value="1"/>
</dbReference>
<dbReference type="FunFam" id="1.10.730.10:FF:000002">
    <property type="entry name" value="Leucine--tRNA ligase"/>
    <property type="match status" value="1"/>
</dbReference>
<dbReference type="FunFam" id="3.40.50.620:FF:000056">
    <property type="entry name" value="Leucine--tRNA ligase"/>
    <property type="match status" value="1"/>
</dbReference>
<dbReference type="FunFam" id="3.40.50.620:FF:000077">
    <property type="entry name" value="Leucine--tRNA ligase"/>
    <property type="match status" value="1"/>
</dbReference>
<dbReference type="Gene3D" id="3.40.50.620">
    <property type="entry name" value="HUPs"/>
    <property type="match status" value="2"/>
</dbReference>
<dbReference type="Gene3D" id="1.10.730.10">
    <property type="entry name" value="Isoleucyl-tRNA Synthetase, Domain 1"/>
    <property type="match status" value="2"/>
</dbReference>
<dbReference type="HAMAP" id="MF_00049_B">
    <property type="entry name" value="Leu_tRNA_synth_B"/>
    <property type="match status" value="1"/>
</dbReference>
<dbReference type="InterPro" id="IPR001412">
    <property type="entry name" value="aa-tRNA-synth_I_CS"/>
</dbReference>
<dbReference type="InterPro" id="IPR002300">
    <property type="entry name" value="aa-tRNA-synth_Ia"/>
</dbReference>
<dbReference type="InterPro" id="IPR002302">
    <property type="entry name" value="Leu-tRNA-ligase"/>
</dbReference>
<dbReference type="InterPro" id="IPR025709">
    <property type="entry name" value="Leu_tRNA-synth_edit"/>
</dbReference>
<dbReference type="InterPro" id="IPR015413">
    <property type="entry name" value="Methionyl/Leucyl_tRNA_Synth"/>
</dbReference>
<dbReference type="InterPro" id="IPR014729">
    <property type="entry name" value="Rossmann-like_a/b/a_fold"/>
</dbReference>
<dbReference type="InterPro" id="IPR009080">
    <property type="entry name" value="tRNAsynth_Ia_anticodon-bd"/>
</dbReference>
<dbReference type="InterPro" id="IPR009008">
    <property type="entry name" value="Val/Leu/Ile-tRNA-synth_edit"/>
</dbReference>
<dbReference type="NCBIfam" id="TIGR00396">
    <property type="entry name" value="leuS_bact"/>
    <property type="match status" value="1"/>
</dbReference>
<dbReference type="PANTHER" id="PTHR43740:SF2">
    <property type="entry name" value="LEUCINE--TRNA LIGASE, MITOCHONDRIAL"/>
    <property type="match status" value="1"/>
</dbReference>
<dbReference type="PANTHER" id="PTHR43740">
    <property type="entry name" value="LEUCYL-TRNA SYNTHETASE"/>
    <property type="match status" value="1"/>
</dbReference>
<dbReference type="Pfam" id="PF00133">
    <property type="entry name" value="tRNA-synt_1"/>
    <property type="match status" value="1"/>
</dbReference>
<dbReference type="Pfam" id="PF13603">
    <property type="entry name" value="tRNA-synt_1_2"/>
    <property type="match status" value="1"/>
</dbReference>
<dbReference type="Pfam" id="PF09334">
    <property type="entry name" value="tRNA-synt_1g"/>
    <property type="match status" value="1"/>
</dbReference>
<dbReference type="PRINTS" id="PR00985">
    <property type="entry name" value="TRNASYNTHLEU"/>
</dbReference>
<dbReference type="SUPFAM" id="SSF47323">
    <property type="entry name" value="Anticodon-binding domain of a subclass of class I aminoacyl-tRNA synthetases"/>
    <property type="match status" value="1"/>
</dbReference>
<dbReference type="SUPFAM" id="SSF52374">
    <property type="entry name" value="Nucleotidylyl transferase"/>
    <property type="match status" value="1"/>
</dbReference>
<dbReference type="SUPFAM" id="SSF50677">
    <property type="entry name" value="ValRS/IleRS/LeuRS editing domain"/>
    <property type="match status" value="1"/>
</dbReference>
<dbReference type="PROSITE" id="PS00178">
    <property type="entry name" value="AA_TRNA_LIGASE_I"/>
    <property type="match status" value="1"/>
</dbReference>
<reference key="1">
    <citation type="journal article" date="1995" name="Science">
        <title>The minimal gene complement of Mycoplasma genitalium.</title>
        <authorList>
            <person name="Fraser C.M."/>
            <person name="Gocayne J.D."/>
            <person name="White O."/>
            <person name="Adams M.D."/>
            <person name="Clayton R.A."/>
            <person name="Fleischmann R.D."/>
            <person name="Bult C.J."/>
            <person name="Kerlavage A.R."/>
            <person name="Sutton G.G."/>
            <person name="Kelley J.M."/>
            <person name="Fritchman J.L."/>
            <person name="Weidman J.F."/>
            <person name="Small K.V."/>
            <person name="Sandusky M."/>
            <person name="Fuhrmann J.L."/>
            <person name="Nguyen D.T."/>
            <person name="Utterback T.R."/>
            <person name="Saudek D.M."/>
            <person name="Phillips C.A."/>
            <person name="Merrick J.M."/>
            <person name="Tomb J.-F."/>
            <person name="Dougherty B.A."/>
            <person name="Bott K.F."/>
            <person name="Hu P.-C."/>
            <person name="Lucier T.S."/>
            <person name="Peterson S.N."/>
            <person name="Smith H.O."/>
            <person name="Hutchison C.A. III"/>
            <person name="Venter J.C."/>
        </authorList>
    </citation>
    <scope>NUCLEOTIDE SEQUENCE [LARGE SCALE GENOMIC DNA]</scope>
    <source>
        <strain>ATCC 33530 / DSM 19775 / NCTC 10195 / G37</strain>
    </source>
</reference>
<reference key="2">
    <citation type="journal article" date="1993" name="J. Bacteriol.">
        <title>A survey of the Mycoplasma genitalium genome by using random sequencing.</title>
        <authorList>
            <person name="Peterson S.N."/>
            <person name="Hu P.-C."/>
            <person name="Bott K.F."/>
            <person name="Hutchison C.A. III"/>
        </authorList>
    </citation>
    <scope>NUCLEOTIDE SEQUENCE [GENOMIC DNA] OF 27-96 AND 208-319</scope>
    <source>
        <strain>ATCC 33530 / DSM 19775 / NCTC 10195 / G37</strain>
    </source>
</reference>
<proteinExistence type="inferred from homology"/>
<name>SYL_MYCGE</name>
<protein>
    <recommendedName>
        <fullName evidence="1">Leucine--tRNA ligase</fullName>
        <ecNumber evidence="1">6.1.1.4</ecNumber>
    </recommendedName>
    <alternativeName>
        <fullName evidence="1">Leucyl-tRNA synthetase</fullName>
        <shortName evidence="1">LeuRS</shortName>
    </alternativeName>
</protein>
<gene>
    <name evidence="1" type="primary">leuS</name>
    <name type="ordered locus">MG266</name>
</gene>
<evidence type="ECO:0000255" key="1">
    <source>
        <dbReference type="HAMAP-Rule" id="MF_00049"/>
    </source>
</evidence>
<evidence type="ECO:0000305" key="2"/>
<organism>
    <name type="scientific">Mycoplasma genitalium (strain ATCC 33530 / DSM 19775 / NCTC 10195 / G37)</name>
    <name type="common">Mycoplasmoides genitalium</name>
    <dbReference type="NCBI Taxonomy" id="243273"/>
    <lineage>
        <taxon>Bacteria</taxon>
        <taxon>Bacillati</taxon>
        <taxon>Mycoplasmatota</taxon>
        <taxon>Mycoplasmoidales</taxon>
        <taxon>Mycoplasmoidaceae</taxon>
        <taxon>Mycoplasmoides</taxon>
    </lineage>
</organism>
<comment type="catalytic activity">
    <reaction evidence="1">
        <text>tRNA(Leu) + L-leucine + ATP = L-leucyl-tRNA(Leu) + AMP + diphosphate</text>
        <dbReference type="Rhea" id="RHEA:11688"/>
        <dbReference type="Rhea" id="RHEA-COMP:9613"/>
        <dbReference type="Rhea" id="RHEA-COMP:9622"/>
        <dbReference type="ChEBI" id="CHEBI:30616"/>
        <dbReference type="ChEBI" id="CHEBI:33019"/>
        <dbReference type="ChEBI" id="CHEBI:57427"/>
        <dbReference type="ChEBI" id="CHEBI:78442"/>
        <dbReference type="ChEBI" id="CHEBI:78494"/>
        <dbReference type="ChEBI" id="CHEBI:456215"/>
        <dbReference type="EC" id="6.1.1.4"/>
    </reaction>
</comment>
<comment type="subcellular location">
    <subcellularLocation>
        <location evidence="1">Cytoplasm</location>
    </subcellularLocation>
</comment>
<comment type="similarity">
    <text evidence="1">Belongs to the class-I aminoacyl-tRNA synthetase family.</text>
</comment>
<feature type="chain" id="PRO_0000152045" description="Leucine--tRNA ligase">
    <location>
        <begin position="1"/>
        <end position="792"/>
    </location>
</feature>
<feature type="short sequence motif" description="'HIGH' region">
    <location>
        <begin position="39"/>
        <end position="50"/>
    </location>
</feature>
<feature type="short sequence motif" description="'KMSKS' region">
    <location>
        <begin position="569"/>
        <end position="573"/>
    </location>
</feature>
<feature type="binding site" evidence="1">
    <location>
        <position position="572"/>
    </location>
    <ligand>
        <name>ATP</name>
        <dbReference type="ChEBI" id="CHEBI:30616"/>
    </ligand>
</feature>
<feature type="sequence conflict" description="In Ref. 2; AAD10600." evidence="2" ref="2">
    <original>Q</original>
    <variation>R</variation>
    <location>
        <position position="86"/>
    </location>
</feature>
<feature type="sequence conflict" description="In Ref. 2; AAD12449." evidence="2" ref="2">
    <original>W</original>
    <variation>V</variation>
    <location>
        <position position="225"/>
    </location>
</feature>
<sequence length="792" mass="91474">MYNHNLIEEKWLKKWKNKDVNRFESDSNKKKYYVLDMFPYPSAAGLHLGHVRAYTITDVISRYYKAKGFNVIHPIGFDAFGLPAEQYAINSNQNPGSWTDQNINNFINQLTSFGFDYDYHLSLKTTDPRYYKYTQWIFSELFKANLAELVDIDVNWCEQLGTVLANEEVLIDSNGNAVSERGSFSVEKRKMKQWVLKITTFADALLEGLDTLDWPEPIKEMQRNWIGKSKGVTINFQLKDHKEAIAIFTTKPQTIFGVSFLAVSTNHWLAKKIAETNKKVASFLKKQLQKTTTLKQKATLYDGIDLLTNAIHPLTNELIPVYVANYVIEGYGTDAIMGVGAHNENDNFFARKQKLKIINVIDKKERLQNSFAYNGLTTKEAQVAITNELISQNKAKLTTVYKLRDWIFSRQRYWGEPFPIIFDENNTPHLVEQLPVELPLLENYKPDGSGNSPLMRNQAWVNIVKDNIHYQRETNTMPQWAGSCWYYLGYLMLIKNPNFWPIDSKEAKKLFDQYLPVDLYVGGAEHAVLHLLYARFWHKFLFDKKLVSTKEPFQKLINQGMVLGPDGKKMSKSKGNTINPTPLVDSHGADALRLYLMFMGPISASLTWNDEGLNGMRRWLDRVYNFFFNHAVVTDQVSQETIFAYNLFLKNSYCHLDKHELNLVISEMMIFLNFLYKTKKISLNYAKGFLTVLSFFAPFLAEELNEKCGLEPFVVKQAISLVDYQLFETAKTKVILSINGKFKAAKEFTKGSLEIDVLESFKQDKEINDILNQPIERVVYVQDRIINVLLKK</sequence>